<keyword id="KW-1003">Cell membrane</keyword>
<keyword id="KW-0966">Cell projection</keyword>
<keyword id="KW-1015">Disulfide bond</keyword>
<keyword id="KW-0297">G-protein coupled receptor</keyword>
<keyword id="KW-0325">Glycoprotein</keyword>
<keyword id="KW-0472">Membrane</keyword>
<keyword id="KW-0675">Receptor</keyword>
<keyword id="KW-1185">Reference proteome</keyword>
<keyword id="KW-0732">Signal</keyword>
<keyword id="KW-0770">Synapse</keyword>
<keyword id="KW-0807">Transducer</keyword>
<keyword id="KW-0812">Transmembrane</keyword>
<keyword id="KW-1133">Transmembrane helix</keyword>
<evidence type="ECO:0000250" key="1"/>
<evidence type="ECO:0000250" key="2">
    <source>
        <dbReference type="UniProtKB" id="Q14416"/>
    </source>
</evidence>
<evidence type="ECO:0000255" key="3"/>
<evidence type="ECO:0000269" key="4">
    <source>
    </source>
</evidence>
<evidence type="ECO:0000269" key="5">
    <source>
    </source>
</evidence>
<evidence type="ECO:0000269" key="6">
    <source>
    </source>
</evidence>
<evidence type="ECO:0000269" key="7">
    <source>
    </source>
</evidence>
<evidence type="ECO:0000269" key="8">
    <source>
    </source>
</evidence>
<evidence type="ECO:0000305" key="9"/>
<accession>Q14BI2</accession>
<organism>
    <name type="scientific">Mus musculus</name>
    <name type="common">Mouse</name>
    <dbReference type="NCBI Taxonomy" id="10090"/>
    <lineage>
        <taxon>Eukaryota</taxon>
        <taxon>Metazoa</taxon>
        <taxon>Chordata</taxon>
        <taxon>Craniata</taxon>
        <taxon>Vertebrata</taxon>
        <taxon>Euteleostomi</taxon>
        <taxon>Mammalia</taxon>
        <taxon>Eutheria</taxon>
        <taxon>Euarchontoglires</taxon>
        <taxon>Glires</taxon>
        <taxon>Rodentia</taxon>
        <taxon>Myomorpha</taxon>
        <taxon>Muroidea</taxon>
        <taxon>Muridae</taxon>
        <taxon>Murinae</taxon>
        <taxon>Mus</taxon>
        <taxon>Mus</taxon>
    </lineage>
</organism>
<name>GRM2_MOUSE</name>
<reference key="1">
    <citation type="journal article" date="2009" name="PLoS Biol.">
        <title>Lineage-specific biology revealed by a finished genome assembly of the mouse.</title>
        <authorList>
            <person name="Church D.M."/>
            <person name="Goodstadt L."/>
            <person name="Hillier L.W."/>
            <person name="Zody M.C."/>
            <person name="Goldstein S."/>
            <person name="She X."/>
            <person name="Bult C.J."/>
            <person name="Agarwala R."/>
            <person name="Cherry J.L."/>
            <person name="DiCuccio M."/>
            <person name="Hlavina W."/>
            <person name="Kapustin Y."/>
            <person name="Meric P."/>
            <person name="Maglott D."/>
            <person name="Birtle Z."/>
            <person name="Marques A.C."/>
            <person name="Graves T."/>
            <person name="Zhou S."/>
            <person name="Teague B."/>
            <person name="Potamousis K."/>
            <person name="Churas C."/>
            <person name="Place M."/>
            <person name="Herschleb J."/>
            <person name="Runnheim R."/>
            <person name="Forrest D."/>
            <person name="Amos-Landgraf J."/>
            <person name="Schwartz D.C."/>
            <person name="Cheng Z."/>
            <person name="Lindblad-Toh K."/>
            <person name="Eichler E.E."/>
            <person name="Ponting C.P."/>
        </authorList>
    </citation>
    <scope>NUCLEOTIDE SEQUENCE [LARGE SCALE GENOMIC DNA]</scope>
    <source>
        <strain>C57BL/6J</strain>
    </source>
</reference>
<reference key="2">
    <citation type="journal article" date="2004" name="Genome Res.">
        <title>The status, quality, and expansion of the NIH full-length cDNA project: the Mammalian Gene Collection (MGC).</title>
        <authorList>
            <consortium name="The MGC Project Team"/>
        </authorList>
    </citation>
    <scope>NUCLEOTIDE SEQUENCE [LARGE SCALE MRNA] OF 1-470</scope>
</reference>
<reference key="3">
    <citation type="journal article" date="1994" name="J. Neurosci.">
        <title>The metabotropic glutamate receptor types 2/3 inhibit L-type calcium channels via a pertussis toxin-sensitive G-protein in cultured cerebellar granule cells.</title>
        <authorList>
            <person name="Chavis P."/>
            <person name="Shinozaki H."/>
            <person name="Bockaert J."/>
            <person name="Fagni L."/>
        </authorList>
    </citation>
    <scope>FUNCTION</scope>
</reference>
<reference key="4">
    <citation type="journal article" date="1996" name="Science">
        <title>Impairment of hippocampal mossy fiber LTD in mice lacking mGluR2.</title>
        <authorList>
            <person name="Yokoi M."/>
            <person name="Kobayashi K."/>
            <person name="Manabe T."/>
            <person name="Takahashi T."/>
            <person name="Sakaguchi I."/>
            <person name="Katsuura G."/>
            <person name="Shigemoto R."/>
            <person name="Ohishi H."/>
            <person name="Nomura S."/>
            <person name="Nakamura K."/>
            <person name="Nakao K."/>
            <person name="Katsuki M."/>
            <person name="Nakanishi S."/>
        </authorList>
    </citation>
    <scope>DISRUPTION PHENOTYPE</scope>
</reference>
<reference key="5">
    <citation type="journal article" date="2005" name="Proc. Natl. Acad. Sci. U.S.A.">
        <title>Enhanced cocaine responsiveness and impaired motor coordination in metabotropic glutamate receptor subtype 2 knockout mice.</title>
        <authorList>
            <person name="Morishima Y."/>
            <person name="Miyakawa T."/>
            <person name="Furuyashiki T."/>
            <person name="Tanaka Y."/>
            <person name="Mizuma H."/>
            <person name="Nakanishi S."/>
        </authorList>
    </citation>
    <scope>DISRUPTION PHENOTYPE</scope>
</reference>
<reference key="6">
    <citation type="journal article" date="2008" name="Nature">
        <title>Identification of a serotonin/glutamate receptor complex implicated in psychosis.</title>
        <authorList>
            <person name="Gonzalez-Maeso J."/>
            <person name="Ang R.L."/>
            <person name="Yuen T."/>
            <person name="Chan P."/>
            <person name="Weisstaub N.V."/>
            <person name="Lopez-Gimenez J.F."/>
            <person name="Zhou M."/>
            <person name="Okawa Y."/>
            <person name="Callado L.F."/>
            <person name="Milligan G."/>
            <person name="Gingrich J.A."/>
            <person name="Filizola M."/>
            <person name="Meana J.J."/>
            <person name="Sealfon S.C."/>
        </authorList>
    </citation>
    <scope>INTERACTION WITH HTR2A</scope>
    <scope>FUNCTION</scope>
    <scope>SUBCELLULAR LOCATION</scope>
    <scope>TISSUE SPECIFICITY</scope>
</reference>
<reference key="7">
    <citation type="journal article" date="2012" name="J. Biol. Chem.">
        <title>Identification of three residues essential for 5-hydroxytryptamine 2A-metabotropic glutamate 2 (5-HT2A.mGlu2) receptor heteromerization and its psychoactive behavioral function.</title>
        <authorList>
            <person name="Moreno J.L."/>
            <person name="Muguruza C."/>
            <person name="Umali A."/>
            <person name="Mortillo S."/>
            <person name="Holloway T."/>
            <person name="Pilar-Cuellar F."/>
            <person name="Mocci G."/>
            <person name="Seto J."/>
            <person name="Callado L.F."/>
            <person name="Neve R.L."/>
            <person name="Milligan G."/>
            <person name="Sealfon S.C."/>
            <person name="Lopez-Gimenez J.F."/>
            <person name="Meana J.J."/>
            <person name="Benson D.L."/>
            <person name="Gonzalez-Maeso J."/>
        </authorList>
    </citation>
    <scope>FUNCTION</scope>
    <scope>SUBCELLULAR LOCATION</scope>
    <scope>TISSUE SPECIFICITY</scope>
</reference>
<feature type="signal peptide" evidence="3">
    <location>
        <begin position="1"/>
        <end position="18"/>
    </location>
</feature>
<feature type="chain" id="PRO_0000306249" description="Metabotropic glutamate receptor 2">
    <location>
        <begin position="19"/>
        <end position="872"/>
    </location>
</feature>
<feature type="topological domain" description="Extracellular" evidence="3">
    <location>
        <begin position="19"/>
        <end position="568"/>
    </location>
</feature>
<feature type="transmembrane region" description="Helical; Name=1" evidence="3">
    <location>
        <begin position="569"/>
        <end position="589"/>
    </location>
</feature>
<feature type="topological domain" description="Cytoplasmic" evidence="3">
    <location>
        <begin position="590"/>
        <end position="604"/>
    </location>
</feature>
<feature type="transmembrane region" description="Helical; Name=2" evidence="3">
    <location>
        <begin position="605"/>
        <end position="625"/>
    </location>
</feature>
<feature type="topological domain" description="Extracellular" evidence="3">
    <location>
        <begin position="626"/>
        <end position="633"/>
    </location>
</feature>
<feature type="transmembrane region" description="Helical; Name=3" evidence="3">
    <location>
        <begin position="634"/>
        <end position="651"/>
    </location>
</feature>
<feature type="topological domain" description="Cytoplasmic" evidence="3">
    <location>
        <begin position="652"/>
        <end position="679"/>
    </location>
</feature>
<feature type="transmembrane region" description="Helical; Name=4" evidence="3">
    <location>
        <begin position="680"/>
        <end position="700"/>
    </location>
</feature>
<feature type="topological domain" description="Extracellular" evidence="3">
    <location>
        <begin position="701"/>
        <end position="726"/>
    </location>
</feature>
<feature type="transmembrane region" description="Helical; Name=5" evidence="3">
    <location>
        <begin position="727"/>
        <end position="747"/>
    </location>
</feature>
<feature type="topological domain" description="Cytoplasmic" evidence="3">
    <location>
        <begin position="748"/>
        <end position="760"/>
    </location>
</feature>
<feature type="transmembrane region" description="Helical; Name=6" evidence="3">
    <location>
        <begin position="761"/>
        <end position="781"/>
    </location>
</feature>
<feature type="topological domain" description="Extracellular" evidence="3">
    <location>
        <begin position="782"/>
        <end position="798"/>
    </location>
</feature>
<feature type="transmembrane region" description="Helical; Name=7" evidence="3">
    <location>
        <begin position="799"/>
        <end position="819"/>
    </location>
</feature>
<feature type="topological domain" description="Cytoplasmic" evidence="3">
    <location>
        <begin position="820"/>
        <end position="872"/>
    </location>
</feature>
<feature type="region of interest" description="Important for interaction with HTR2A" evidence="1">
    <location>
        <begin position="677"/>
        <end position="685"/>
    </location>
</feature>
<feature type="binding site" evidence="2">
    <location>
        <position position="57"/>
    </location>
    <ligand>
        <name>L-glutamate</name>
        <dbReference type="ChEBI" id="CHEBI:29985"/>
    </ligand>
</feature>
<feature type="binding site" evidence="2">
    <location>
        <position position="61"/>
    </location>
    <ligand>
        <name>L-glutamate</name>
        <dbReference type="ChEBI" id="CHEBI:29985"/>
    </ligand>
</feature>
<feature type="binding site" evidence="2">
    <location>
        <position position="145"/>
    </location>
    <ligand>
        <name>L-glutamate</name>
        <dbReference type="ChEBI" id="CHEBI:29985"/>
    </ligand>
</feature>
<feature type="binding site" evidence="2">
    <location>
        <position position="166"/>
    </location>
    <ligand>
        <name>L-glutamate</name>
        <dbReference type="ChEBI" id="CHEBI:29985"/>
    </ligand>
</feature>
<feature type="binding site" evidence="2">
    <location>
        <position position="168"/>
    </location>
    <ligand>
        <name>L-glutamate</name>
        <dbReference type="ChEBI" id="CHEBI:29985"/>
    </ligand>
</feature>
<feature type="binding site" evidence="2">
    <location>
        <position position="295"/>
    </location>
    <ligand>
        <name>L-glutamate</name>
        <dbReference type="ChEBI" id="CHEBI:29985"/>
    </ligand>
</feature>
<feature type="binding site" evidence="2">
    <location>
        <position position="377"/>
    </location>
    <ligand>
        <name>L-glutamate</name>
        <dbReference type="ChEBI" id="CHEBI:29985"/>
    </ligand>
</feature>
<feature type="glycosylation site" description="N-linked (GlcNAc...) asparagine" evidence="2">
    <location>
        <position position="203"/>
    </location>
</feature>
<feature type="glycosylation site" description="N-linked (GlcNAc...) asparagine" evidence="2">
    <location>
        <position position="286"/>
    </location>
</feature>
<feature type="glycosylation site" description="N-linked (GlcNAc...) asparagine" evidence="3">
    <location>
        <position position="338"/>
    </location>
</feature>
<feature type="glycosylation site" description="N-linked (GlcNAc...) asparagine" evidence="3">
    <location>
        <position position="402"/>
    </location>
</feature>
<feature type="glycosylation site" description="N-linked (GlcNAc...) asparagine" evidence="3">
    <location>
        <position position="547"/>
    </location>
</feature>
<feature type="disulfide bond" evidence="2">
    <location>
        <begin position="50"/>
        <end position="92"/>
    </location>
</feature>
<feature type="disulfide bond" evidence="2">
    <location>
        <begin position="234"/>
        <end position="518"/>
    </location>
</feature>
<feature type="disulfide bond" evidence="2">
    <location>
        <begin position="355"/>
        <end position="362"/>
    </location>
</feature>
<feature type="disulfide bond" evidence="2">
    <location>
        <begin position="400"/>
        <end position="407"/>
    </location>
</feature>
<feature type="disulfide bond" evidence="2">
    <location>
        <begin position="500"/>
        <end position="519"/>
    </location>
</feature>
<feature type="disulfide bond" evidence="2">
    <location>
        <begin position="504"/>
        <end position="522"/>
    </location>
</feature>
<feature type="disulfide bond" evidence="2">
    <location>
        <begin position="525"/>
        <end position="537"/>
    </location>
</feature>
<feature type="disulfide bond" evidence="2">
    <location>
        <begin position="540"/>
        <end position="553"/>
    </location>
</feature>
<feature type="disulfide bond" evidence="2">
    <location>
        <begin position="632"/>
        <end position="721"/>
    </location>
</feature>
<dbReference type="EMBL" id="AC152452">
    <property type="status" value="NOT_ANNOTATED_CDS"/>
    <property type="molecule type" value="Genomic_DNA"/>
</dbReference>
<dbReference type="EMBL" id="BC115866">
    <property type="protein sequence ID" value="AAI15867.1"/>
    <property type="molecule type" value="mRNA"/>
</dbReference>
<dbReference type="CCDS" id="CCDS52914.1"/>
<dbReference type="RefSeq" id="NP_001153825.1">
    <property type="nucleotide sequence ID" value="NM_001160353.1"/>
</dbReference>
<dbReference type="SMR" id="Q14BI2"/>
<dbReference type="BioGRID" id="223807">
    <property type="interactions" value="5"/>
</dbReference>
<dbReference type="FunCoup" id="Q14BI2">
    <property type="interactions" value="875"/>
</dbReference>
<dbReference type="IntAct" id="Q14BI2">
    <property type="interactions" value="6"/>
</dbReference>
<dbReference type="MINT" id="Q14BI2"/>
<dbReference type="STRING" id="10090.ENSMUSP00000023959"/>
<dbReference type="GlyConnect" id="2507">
    <property type="glycosylation" value="2 N-Linked glycans (1 site)"/>
</dbReference>
<dbReference type="GlyCosmos" id="Q14BI2">
    <property type="glycosylation" value="5 sites, 2 glycans"/>
</dbReference>
<dbReference type="GlyGen" id="Q14BI2">
    <property type="glycosylation" value="7 sites, 5 N-linked glycans (3 sites), 1 O-linked glycan (2 sites)"/>
</dbReference>
<dbReference type="iPTMnet" id="Q14BI2"/>
<dbReference type="PhosphoSitePlus" id="Q14BI2"/>
<dbReference type="SwissPalm" id="Q14BI2"/>
<dbReference type="PaxDb" id="10090-ENSMUSP00000023959"/>
<dbReference type="PeptideAtlas" id="Q14BI2"/>
<dbReference type="ProteomicsDB" id="269839"/>
<dbReference type="Antibodypedia" id="14188">
    <property type="antibodies" value="533 antibodies from 43 providers"/>
</dbReference>
<dbReference type="Ensembl" id="ENSMUST00000023959.13">
    <property type="protein sequence ID" value="ENSMUSP00000023959.8"/>
    <property type="gene ID" value="ENSMUSG00000023192.13"/>
</dbReference>
<dbReference type="GeneID" id="108068"/>
<dbReference type="KEGG" id="mmu:108068"/>
<dbReference type="UCSC" id="uc009rkj.3">
    <property type="organism name" value="mouse"/>
</dbReference>
<dbReference type="AGR" id="MGI:1351339"/>
<dbReference type="CTD" id="2912"/>
<dbReference type="MGI" id="MGI:1351339">
    <property type="gene designation" value="Grm2"/>
</dbReference>
<dbReference type="VEuPathDB" id="HostDB:ENSMUSG00000023192"/>
<dbReference type="eggNOG" id="KOG1056">
    <property type="taxonomic scope" value="Eukaryota"/>
</dbReference>
<dbReference type="GeneTree" id="ENSGT01030000234595"/>
<dbReference type="InParanoid" id="Q14BI2"/>
<dbReference type="OMA" id="HEKGNPT"/>
<dbReference type="OrthoDB" id="425344at2759"/>
<dbReference type="PhylomeDB" id="Q14BI2"/>
<dbReference type="TreeFam" id="TF313240"/>
<dbReference type="Reactome" id="R-MMU-418594">
    <property type="pathway name" value="G alpha (i) signalling events"/>
</dbReference>
<dbReference type="Reactome" id="R-MMU-420499">
    <property type="pathway name" value="Class C/3 (Metabotropic glutamate/pheromone receptors)"/>
</dbReference>
<dbReference type="BioGRID-ORCS" id="108068">
    <property type="hits" value="1 hit in 81 CRISPR screens"/>
</dbReference>
<dbReference type="CD-CODE" id="CE726F99">
    <property type="entry name" value="Postsynaptic density"/>
</dbReference>
<dbReference type="PRO" id="PR:Q14BI2"/>
<dbReference type="Proteomes" id="UP000000589">
    <property type="component" value="Chromosome 9"/>
</dbReference>
<dbReference type="RNAct" id="Q14BI2">
    <property type="molecule type" value="protein"/>
</dbReference>
<dbReference type="Bgee" id="ENSMUSG00000023192">
    <property type="expression patterns" value="Expressed in animal zygote and 43 other cell types or tissues"/>
</dbReference>
<dbReference type="ExpressionAtlas" id="Q14BI2">
    <property type="expression patterns" value="baseline and differential"/>
</dbReference>
<dbReference type="GO" id="GO:0097449">
    <property type="term" value="C:astrocyte projection"/>
    <property type="evidence" value="ECO:0007669"/>
    <property type="project" value="Ensembl"/>
</dbReference>
<dbReference type="GO" id="GO:0030424">
    <property type="term" value="C:axon"/>
    <property type="evidence" value="ECO:0007669"/>
    <property type="project" value="Ensembl"/>
</dbReference>
<dbReference type="GO" id="GO:0030425">
    <property type="term" value="C:dendrite"/>
    <property type="evidence" value="ECO:0007669"/>
    <property type="project" value="UniProtKB-SubCell"/>
</dbReference>
<dbReference type="GO" id="GO:0098978">
    <property type="term" value="C:glutamatergic synapse"/>
    <property type="evidence" value="ECO:0000314"/>
    <property type="project" value="SynGO"/>
</dbReference>
<dbReference type="GO" id="GO:0043005">
    <property type="term" value="C:neuron projection"/>
    <property type="evidence" value="ECO:0000314"/>
    <property type="project" value="MGI"/>
</dbReference>
<dbReference type="GO" id="GO:0045211">
    <property type="term" value="C:postsynaptic membrane"/>
    <property type="evidence" value="ECO:0000314"/>
    <property type="project" value="SynGO"/>
</dbReference>
<dbReference type="GO" id="GO:0042734">
    <property type="term" value="C:presynaptic membrane"/>
    <property type="evidence" value="ECO:0007669"/>
    <property type="project" value="Ensembl"/>
</dbReference>
<dbReference type="GO" id="GO:0005246">
    <property type="term" value="F:calcium channel regulator activity"/>
    <property type="evidence" value="ECO:0000314"/>
    <property type="project" value="MGI"/>
</dbReference>
<dbReference type="GO" id="GO:0001641">
    <property type="term" value="F:group II metabotropic glutamate receptor activity"/>
    <property type="evidence" value="ECO:0000314"/>
    <property type="project" value="MGI"/>
</dbReference>
<dbReference type="GO" id="GO:0097110">
    <property type="term" value="F:scaffold protein binding"/>
    <property type="evidence" value="ECO:0007669"/>
    <property type="project" value="Ensembl"/>
</dbReference>
<dbReference type="GO" id="GO:0035095">
    <property type="term" value="P:behavioral response to nicotine"/>
    <property type="evidence" value="ECO:0007669"/>
    <property type="project" value="Ensembl"/>
</dbReference>
<dbReference type="GO" id="GO:0033554">
    <property type="term" value="P:cellular response to stress"/>
    <property type="evidence" value="ECO:0000314"/>
    <property type="project" value="MGI"/>
</dbReference>
<dbReference type="GO" id="GO:0010467">
    <property type="term" value="P:gene expression"/>
    <property type="evidence" value="ECO:0000315"/>
    <property type="project" value="MGI"/>
</dbReference>
<dbReference type="GO" id="GO:0014047">
    <property type="term" value="P:glutamate secretion"/>
    <property type="evidence" value="ECO:0007669"/>
    <property type="project" value="Ensembl"/>
</dbReference>
<dbReference type="GO" id="GO:0090461">
    <property type="term" value="P:intracellular glutamate homeostasis"/>
    <property type="evidence" value="ECO:0000316"/>
    <property type="project" value="MGI"/>
</dbReference>
<dbReference type="GO" id="GO:0060292">
    <property type="term" value="P:long-term synaptic depression"/>
    <property type="evidence" value="ECO:0000315"/>
    <property type="project" value="MGI"/>
</dbReference>
<dbReference type="GO" id="GO:0051897">
    <property type="term" value="P:positive regulation of phosphatidylinositol 3-kinase/protein kinase B signal transduction"/>
    <property type="evidence" value="ECO:0007669"/>
    <property type="project" value="Ensembl"/>
</dbReference>
<dbReference type="GO" id="GO:0099171">
    <property type="term" value="P:presynaptic modulation of chemical synaptic transmission"/>
    <property type="evidence" value="ECO:0000314"/>
    <property type="project" value="SynGO"/>
</dbReference>
<dbReference type="GO" id="GO:0014059">
    <property type="term" value="P:regulation of dopamine secretion"/>
    <property type="evidence" value="ECO:0007669"/>
    <property type="project" value="Ensembl"/>
</dbReference>
<dbReference type="GO" id="GO:0014048">
    <property type="term" value="P:regulation of glutamate secretion"/>
    <property type="evidence" value="ECO:0007669"/>
    <property type="project" value="Ensembl"/>
</dbReference>
<dbReference type="GO" id="GO:2001023">
    <property type="term" value="P:regulation of response to drug"/>
    <property type="evidence" value="ECO:0007669"/>
    <property type="project" value="Ensembl"/>
</dbReference>
<dbReference type="GO" id="GO:0042220">
    <property type="term" value="P:response to cocaine"/>
    <property type="evidence" value="ECO:0007669"/>
    <property type="project" value="Ensembl"/>
</dbReference>
<dbReference type="CDD" id="cd15447">
    <property type="entry name" value="7tmC_mGluR2"/>
    <property type="match status" value="1"/>
</dbReference>
<dbReference type="CDD" id="cd06375">
    <property type="entry name" value="PBP1_mGluR_groupII"/>
    <property type="match status" value="1"/>
</dbReference>
<dbReference type="FunFam" id="3.40.50.2300:FF:001113">
    <property type="match status" value="1"/>
</dbReference>
<dbReference type="FunFam" id="3.40.50.2300:FF:001127">
    <property type="match status" value="1"/>
</dbReference>
<dbReference type="FunFam" id="2.10.50.30:FF:000001">
    <property type="entry name" value="metabotropic glutamate receptor 1"/>
    <property type="match status" value="1"/>
</dbReference>
<dbReference type="FunFam" id="3.40.50.2300:FF:000029">
    <property type="entry name" value="Metabotropic glutamate receptor 3"/>
    <property type="match status" value="1"/>
</dbReference>
<dbReference type="Gene3D" id="3.40.50.2300">
    <property type="match status" value="2"/>
</dbReference>
<dbReference type="Gene3D" id="2.10.50.30">
    <property type="entry name" value="GPCR, family 3, nine cysteines domain"/>
    <property type="match status" value="1"/>
</dbReference>
<dbReference type="InterPro" id="IPR001828">
    <property type="entry name" value="ANF_lig-bd_rcpt"/>
</dbReference>
<dbReference type="InterPro" id="IPR000337">
    <property type="entry name" value="GPCR_3"/>
</dbReference>
<dbReference type="InterPro" id="IPR011500">
    <property type="entry name" value="GPCR_3_9-Cys_dom"/>
</dbReference>
<dbReference type="InterPro" id="IPR038550">
    <property type="entry name" value="GPCR_3_9-Cys_sf"/>
</dbReference>
<dbReference type="InterPro" id="IPR017978">
    <property type="entry name" value="GPCR_3_C"/>
</dbReference>
<dbReference type="InterPro" id="IPR017979">
    <property type="entry name" value="GPCR_3_CS"/>
</dbReference>
<dbReference type="InterPro" id="IPR001458">
    <property type="entry name" value="GPCR_3_mGluR2"/>
</dbReference>
<dbReference type="InterPro" id="IPR000162">
    <property type="entry name" value="GPCR_3_mtglu_rcpt"/>
</dbReference>
<dbReference type="InterPro" id="IPR050726">
    <property type="entry name" value="mGluR"/>
</dbReference>
<dbReference type="InterPro" id="IPR028082">
    <property type="entry name" value="Peripla_BP_I"/>
</dbReference>
<dbReference type="PANTHER" id="PTHR24060">
    <property type="entry name" value="METABOTROPIC GLUTAMATE RECEPTOR"/>
    <property type="match status" value="1"/>
</dbReference>
<dbReference type="Pfam" id="PF00003">
    <property type="entry name" value="7tm_3"/>
    <property type="match status" value="1"/>
</dbReference>
<dbReference type="Pfam" id="PF01094">
    <property type="entry name" value="ANF_receptor"/>
    <property type="match status" value="1"/>
</dbReference>
<dbReference type="Pfam" id="PF07562">
    <property type="entry name" value="NCD3G"/>
    <property type="match status" value="1"/>
</dbReference>
<dbReference type="PRINTS" id="PR00248">
    <property type="entry name" value="GPCRMGR"/>
</dbReference>
<dbReference type="PRINTS" id="PR01052">
    <property type="entry name" value="MTABOTROPC2R"/>
</dbReference>
<dbReference type="PRINTS" id="PR00593">
    <property type="entry name" value="MTABOTROPICR"/>
</dbReference>
<dbReference type="SUPFAM" id="SSF53822">
    <property type="entry name" value="Periplasmic binding protein-like I"/>
    <property type="match status" value="1"/>
</dbReference>
<dbReference type="PROSITE" id="PS00979">
    <property type="entry name" value="G_PROTEIN_RECEP_F3_1"/>
    <property type="match status" value="1"/>
</dbReference>
<dbReference type="PROSITE" id="PS00980">
    <property type="entry name" value="G_PROTEIN_RECEP_F3_2"/>
    <property type="match status" value="1"/>
</dbReference>
<dbReference type="PROSITE" id="PS00981">
    <property type="entry name" value="G_PROTEIN_RECEP_F3_3"/>
    <property type="match status" value="1"/>
</dbReference>
<dbReference type="PROSITE" id="PS50259">
    <property type="entry name" value="G_PROTEIN_RECEP_F3_4"/>
    <property type="match status" value="1"/>
</dbReference>
<sequence length="872" mass="95887">MESLLRFLALLLLRGAVAEGPAKKVLTLEGDLVLGGLFPVHQKGGPAEECGPVNEHRGIQRLEAMLFALDRINRDPHLLPGVRLGAHILDSCSKDTHALEQALDFVRASLSRGADGSRHICPDGSYATLSDAPTAITGVIGGSYSDVSIQVANLLRLFQIPQISYASTSAKLSDKSRYDYFARTVPPDFFQAKAMAEILRFFNWTYVSTVASEGDYGETGIEAFELEARARNICVATSEKVGRAMSRAAFEGVVRALLQKPSARVAVLFTRSEDARELLAATQRLNASFTWVASDGWGALESVVAGSERAAEGAITIELASYPISDFASYFQNLDPWNNSRNPWFREFWEERFRCSFRQRDCAAHSLRAVPFEQESKIMFVVNAVYAMAHALHNMHRALCPNTTRLCDAMRPVNGRRLYKDFVLNVKFDAPFRPADTDDEVRFDRFGDGIGRYNIFTYLRAGNGRYRYQKVGYWAEGLTLDTSIIPWASPSAGTLPASRCSEPCLQNEVKSVQPGEVCCWLCIPCQPYEYRLDEFTCADCGLGYWPNASLTGCFELPQEYIRWGDAWAVGPVTIACLGALATLFVLGVFVRHNATPVVKASGRELCYILLGGVFLCYCMTFIFIAKPSTAVCTLRRLGLGTAFSVCYSALLTKTNRIARIFGGAREGAQRPRFISPASQVAICLALISGQLLIVAAWLVVEAPGIGKETAPERREVVTLRCNHRDASMLGSLAYNVLLIALCTLYAFKTRKCPENFNEAKFIGFTMYTTCIIWLAFLPIFYVTSSDYRVQTTTMCVSVSLSGSVVLGCLFAPKLHIILFQPQKNVVSHRAPTSRFGSAAPRASANLGQGSGSQLVPTVCNGREVVDSTTSSL</sequence>
<gene>
    <name type="primary">Grm2</name>
    <name type="synonym">Gprc1b</name>
    <name type="synonym">Mglur2</name>
</gene>
<proteinExistence type="evidence at protein level"/>
<protein>
    <recommendedName>
        <fullName>Metabotropic glutamate receptor 2</fullName>
        <shortName>mGluR2</shortName>
    </recommendedName>
</protein>
<comment type="function">
    <text evidence="2 5 6 7">Dimeric G protein-coupled receptor which is activated by the excitatory neurotransmitter L-glutamate (By similarity). Plays critical roles in modulating synaptic transmission and neuronal excitability. Upon activation by glutamate, inhibits presynaptic calcium channels, reducing further glutamate release and dampening excitatory signaling (PubMed:7965099). Mechanistically, ligand binding causes a conformation change that triggers signaling via guanine nucleotide-binding proteins (G proteins) and modulates the activity of down-stream effectors, such as adenylate cyclase. May mediate suppression of neurotransmission or may be involved in synaptogenesis or synaptic stabilization (By similarity).</text>
</comment>
<comment type="subunit">
    <text evidence="2 5">Forms heterodimers with GRM3 or GRM4. Interacts with GNAI1 (By similarity). Interacts with TAMALIN (By similarity). Interacts with HTR2A (PubMed:18297054).</text>
</comment>
<comment type="subcellular location">
    <subcellularLocation>
        <location>Cell membrane</location>
        <topology>Multi-pass membrane protein</topology>
    </subcellularLocation>
    <subcellularLocation>
        <location>Synapse</location>
    </subcellularLocation>
    <subcellularLocation>
        <location>Cell projection</location>
        <location>Dendrite</location>
    </subcellularLocation>
</comment>
<comment type="tissue specificity">
    <text evidence="5 6">Detected in neurons in brain cortex (at protein level).</text>
</comment>
<comment type="disruption phenotype">
    <text evidence="4 8">Grm2-deletion mice are healthy and show no obvious alteration in physical characteristics (PubMed:15753323). However, they show reduced mossy fiber long-term depression and locomotor hyperactivity under novel environmental and stressful conditions (PubMed:8662555, PubMed:15753323). Furthermore, grm2-null mutation leads to altered responses in several behavioral tests, including a significant increase in cocaine-induced behaviors associated with reinforcement and addiction (PubMed:15753323).</text>
</comment>
<comment type="similarity">
    <text evidence="9">Belongs to the G-protein coupled receptor 3 family.</text>
</comment>